<proteinExistence type="inferred from homology"/>
<sequence length="856" mass="95475">MNVIDTDDLEKHTPMMRQYLTMKAEHHDMLLFYRMGDFYELFYDDAKRASELLGISLTARGKSGGDPIPMAGIPYHAVEGYLAKLVQIGQSVAICEQIGDPATAKGPVERKVVRIVTPGTLTDEALLQERQDNLLAAVYQGKVGFGYATLDVSSGRFVIAELDTKESLEAELQRTNPVEILYSEDFGELGLLSHFKGKRRRPEWEFDYDTSIKLLLAQFGTKDLHGFGISDARLSLQAAGCLMQYVKDTQRTTLPHINAIIRFNQADSIVLDAATRRNLELTQNLAGGRDNTLAAVLDNTATAMGSRMLQRWIHQPLRDPNQIIARQTAVNELLKTGTHEPLHEQLKALGDIERIMARLALRTARPRDFARLRQALSLLPELQQSLSVLNAPHTVKLCQYLGEFPEEQALLERAIVDNPPMLIRDGGVIREGYNNELDEWRGLSEGASDYLVQLEAREKERTGINTLKVGYNRVHGYYIEVSRLQSSQVPLNYQRRQTLKNMERYITPELKEYEEKVLSSQGKALALEKQLWEQLFDLILPKLHELQAFARAAAELDVLSNFAERAETLGYICPQLSQDIGVQIDAGRHPVVERVSQTPFIANPVTLHNQRRMLIVTGPNMGGKSTYMRQVALITLMAHIGCFVPAERAVIGPIDRIFTRIGASDDLASGRSTFMVEMTETANILHNATAQSLVLMDEIGRGTSTYDGLSLAWSAAEYLAQQIGAMTLFATHYFELTQLPDLMAGVYNVHLDAIEHEDTIAFMHAVQEGAASKSYGLQVAALAGVPAKVIKAAKHKLQQLESRDHQLEGTKTPIQTLLALPEPAENPALTKLQAINPDNLTPKQALDLLYELKRLS</sequence>
<gene>
    <name evidence="1" type="primary">mutS</name>
    <name type="ordered locus">Sputw3181_1264</name>
</gene>
<keyword id="KW-0067">ATP-binding</keyword>
<keyword id="KW-0227">DNA damage</keyword>
<keyword id="KW-0234">DNA repair</keyword>
<keyword id="KW-0238">DNA-binding</keyword>
<keyword id="KW-0547">Nucleotide-binding</keyword>
<organism>
    <name type="scientific">Shewanella sp. (strain W3-18-1)</name>
    <dbReference type="NCBI Taxonomy" id="351745"/>
    <lineage>
        <taxon>Bacteria</taxon>
        <taxon>Pseudomonadati</taxon>
        <taxon>Pseudomonadota</taxon>
        <taxon>Gammaproteobacteria</taxon>
        <taxon>Alteromonadales</taxon>
        <taxon>Shewanellaceae</taxon>
        <taxon>Shewanella</taxon>
    </lineage>
</organism>
<protein>
    <recommendedName>
        <fullName evidence="1">DNA mismatch repair protein MutS</fullName>
    </recommendedName>
</protein>
<accession>A1RHG2</accession>
<dbReference type="EMBL" id="CP000503">
    <property type="protein sequence ID" value="ABM24107.1"/>
    <property type="molecule type" value="Genomic_DNA"/>
</dbReference>
<dbReference type="RefSeq" id="WP_011788614.1">
    <property type="nucleotide sequence ID" value="NC_008750.1"/>
</dbReference>
<dbReference type="SMR" id="A1RHG2"/>
<dbReference type="KEGG" id="shw:Sputw3181_1264"/>
<dbReference type="HOGENOM" id="CLU_002472_4_0_6"/>
<dbReference type="Proteomes" id="UP000002597">
    <property type="component" value="Chromosome"/>
</dbReference>
<dbReference type="GO" id="GO:0005829">
    <property type="term" value="C:cytosol"/>
    <property type="evidence" value="ECO:0007669"/>
    <property type="project" value="TreeGrafter"/>
</dbReference>
<dbReference type="GO" id="GO:0005524">
    <property type="term" value="F:ATP binding"/>
    <property type="evidence" value="ECO:0007669"/>
    <property type="project" value="UniProtKB-UniRule"/>
</dbReference>
<dbReference type="GO" id="GO:0140664">
    <property type="term" value="F:ATP-dependent DNA damage sensor activity"/>
    <property type="evidence" value="ECO:0007669"/>
    <property type="project" value="InterPro"/>
</dbReference>
<dbReference type="GO" id="GO:0003684">
    <property type="term" value="F:damaged DNA binding"/>
    <property type="evidence" value="ECO:0007669"/>
    <property type="project" value="UniProtKB-UniRule"/>
</dbReference>
<dbReference type="GO" id="GO:0030983">
    <property type="term" value="F:mismatched DNA binding"/>
    <property type="evidence" value="ECO:0007669"/>
    <property type="project" value="InterPro"/>
</dbReference>
<dbReference type="GO" id="GO:0006298">
    <property type="term" value="P:mismatch repair"/>
    <property type="evidence" value="ECO:0007669"/>
    <property type="project" value="UniProtKB-UniRule"/>
</dbReference>
<dbReference type="CDD" id="cd03284">
    <property type="entry name" value="ABC_MutS1"/>
    <property type="match status" value="1"/>
</dbReference>
<dbReference type="FunFam" id="1.10.1420.10:FF:000002">
    <property type="entry name" value="DNA mismatch repair protein MutS"/>
    <property type="match status" value="1"/>
</dbReference>
<dbReference type="FunFam" id="3.30.420.110:FF:000001">
    <property type="entry name" value="DNA mismatch repair protein MutS"/>
    <property type="match status" value="1"/>
</dbReference>
<dbReference type="FunFam" id="3.40.1170.10:FF:000001">
    <property type="entry name" value="DNA mismatch repair protein MutS"/>
    <property type="match status" value="1"/>
</dbReference>
<dbReference type="FunFam" id="3.40.50.300:FF:000283">
    <property type="entry name" value="DNA mismatch repair protein MutS"/>
    <property type="match status" value="1"/>
</dbReference>
<dbReference type="Gene3D" id="1.10.1420.10">
    <property type="match status" value="2"/>
</dbReference>
<dbReference type="Gene3D" id="6.10.140.430">
    <property type="match status" value="1"/>
</dbReference>
<dbReference type="Gene3D" id="3.40.1170.10">
    <property type="entry name" value="DNA repair protein MutS, domain I"/>
    <property type="match status" value="1"/>
</dbReference>
<dbReference type="Gene3D" id="3.30.420.110">
    <property type="entry name" value="MutS, connector domain"/>
    <property type="match status" value="1"/>
</dbReference>
<dbReference type="Gene3D" id="3.40.50.300">
    <property type="entry name" value="P-loop containing nucleotide triphosphate hydrolases"/>
    <property type="match status" value="1"/>
</dbReference>
<dbReference type="HAMAP" id="MF_00096">
    <property type="entry name" value="MutS"/>
    <property type="match status" value="1"/>
</dbReference>
<dbReference type="InterPro" id="IPR005748">
    <property type="entry name" value="DNA_mismatch_repair_MutS"/>
</dbReference>
<dbReference type="InterPro" id="IPR007695">
    <property type="entry name" value="DNA_mismatch_repair_MutS-lik_N"/>
</dbReference>
<dbReference type="InterPro" id="IPR017261">
    <property type="entry name" value="DNA_mismatch_repair_MutS/MSH"/>
</dbReference>
<dbReference type="InterPro" id="IPR000432">
    <property type="entry name" value="DNA_mismatch_repair_MutS_C"/>
</dbReference>
<dbReference type="InterPro" id="IPR007861">
    <property type="entry name" value="DNA_mismatch_repair_MutS_clamp"/>
</dbReference>
<dbReference type="InterPro" id="IPR007696">
    <property type="entry name" value="DNA_mismatch_repair_MutS_core"/>
</dbReference>
<dbReference type="InterPro" id="IPR016151">
    <property type="entry name" value="DNA_mismatch_repair_MutS_N"/>
</dbReference>
<dbReference type="InterPro" id="IPR036187">
    <property type="entry name" value="DNA_mismatch_repair_MutS_sf"/>
</dbReference>
<dbReference type="InterPro" id="IPR007860">
    <property type="entry name" value="DNA_mmatch_repair_MutS_con_dom"/>
</dbReference>
<dbReference type="InterPro" id="IPR045076">
    <property type="entry name" value="MutS"/>
</dbReference>
<dbReference type="InterPro" id="IPR036678">
    <property type="entry name" value="MutS_con_dom_sf"/>
</dbReference>
<dbReference type="InterPro" id="IPR027417">
    <property type="entry name" value="P-loop_NTPase"/>
</dbReference>
<dbReference type="NCBIfam" id="TIGR01070">
    <property type="entry name" value="mutS1"/>
    <property type="match status" value="1"/>
</dbReference>
<dbReference type="NCBIfam" id="NF003810">
    <property type="entry name" value="PRK05399.1"/>
    <property type="match status" value="1"/>
</dbReference>
<dbReference type="PANTHER" id="PTHR11361:SF34">
    <property type="entry name" value="DNA MISMATCH REPAIR PROTEIN MSH1, MITOCHONDRIAL"/>
    <property type="match status" value="1"/>
</dbReference>
<dbReference type="PANTHER" id="PTHR11361">
    <property type="entry name" value="DNA MISMATCH REPAIR PROTEIN MUTS FAMILY MEMBER"/>
    <property type="match status" value="1"/>
</dbReference>
<dbReference type="Pfam" id="PF01624">
    <property type="entry name" value="MutS_I"/>
    <property type="match status" value="1"/>
</dbReference>
<dbReference type="Pfam" id="PF05188">
    <property type="entry name" value="MutS_II"/>
    <property type="match status" value="1"/>
</dbReference>
<dbReference type="Pfam" id="PF05192">
    <property type="entry name" value="MutS_III"/>
    <property type="match status" value="1"/>
</dbReference>
<dbReference type="Pfam" id="PF05190">
    <property type="entry name" value="MutS_IV"/>
    <property type="match status" value="1"/>
</dbReference>
<dbReference type="Pfam" id="PF00488">
    <property type="entry name" value="MutS_V"/>
    <property type="match status" value="1"/>
</dbReference>
<dbReference type="PIRSF" id="PIRSF037677">
    <property type="entry name" value="DNA_mis_repair_Msh6"/>
    <property type="match status" value="1"/>
</dbReference>
<dbReference type="SMART" id="SM00534">
    <property type="entry name" value="MUTSac"/>
    <property type="match status" value="1"/>
</dbReference>
<dbReference type="SMART" id="SM00533">
    <property type="entry name" value="MUTSd"/>
    <property type="match status" value="1"/>
</dbReference>
<dbReference type="SUPFAM" id="SSF55271">
    <property type="entry name" value="DNA repair protein MutS, domain I"/>
    <property type="match status" value="1"/>
</dbReference>
<dbReference type="SUPFAM" id="SSF53150">
    <property type="entry name" value="DNA repair protein MutS, domain II"/>
    <property type="match status" value="1"/>
</dbReference>
<dbReference type="SUPFAM" id="SSF48334">
    <property type="entry name" value="DNA repair protein MutS, domain III"/>
    <property type="match status" value="1"/>
</dbReference>
<dbReference type="SUPFAM" id="SSF52540">
    <property type="entry name" value="P-loop containing nucleoside triphosphate hydrolases"/>
    <property type="match status" value="1"/>
</dbReference>
<dbReference type="PROSITE" id="PS00486">
    <property type="entry name" value="DNA_MISMATCH_REPAIR_2"/>
    <property type="match status" value="1"/>
</dbReference>
<evidence type="ECO:0000255" key="1">
    <source>
        <dbReference type="HAMAP-Rule" id="MF_00096"/>
    </source>
</evidence>
<feature type="chain" id="PRO_1000008100" description="DNA mismatch repair protein MutS">
    <location>
        <begin position="1"/>
        <end position="856"/>
    </location>
</feature>
<feature type="binding site" evidence="1">
    <location>
        <begin position="618"/>
        <end position="625"/>
    </location>
    <ligand>
        <name>ATP</name>
        <dbReference type="ChEBI" id="CHEBI:30616"/>
    </ligand>
</feature>
<reference key="1">
    <citation type="submission" date="2006-12" db="EMBL/GenBank/DDBJ databases">
        <title>Complete sequence of Shewanella sp. W3-18-1.</title>
        <authorList>
            <consortium name="US DOE Joint Genome Institute"/>
            <person name="Copeland A."/>
            <person name="Lucas S."/>
            <person name="Lapidus A."/>
            <person name="Barry K."/>
            <person name="Detter J.C."/>
            <person name="Glavina del Rio T."/>
            <person name="Hammon N."/>
            <person name="Israni S."/>
            <person name="Dalin E."/>
            <person name="Tice H."/>
            <person name="Pitluck S."/>
            <person name="Chain P."/>
            <person name="Malfatti S."/>
            <person name="Shin M."/>
            <person name="Vergez L."/>
            <person name="Schmutz J."/>
            <person name="Larimer F."/>
            <person name="Land M."/>
            <person name="Hauser L."/>
            <person name="Kyrpides N."/>
            <person name="Lykidis A."/>
            <person name="Tiedje J."/>
            <person name="Richardson P."/>
        </authorList>
    </citation>
    <scope>NUCLEOTIDE SEQUENCE [LARGE SCALE GENOMIC DNA]</scope>
    <source>
        <strain>W3-18-1</strain>
    </source>
</reference>
<name>MUTS_SHESW</name>
<comment type="function">
    <text evidence="1">This protein is involved in the repair of mismatches in DNA. It is possible that it carries out the mismatch recognition step. This protein has a weak ATPase activity.</text>
</comment>
<comment type="similarity">
    <text evidence="1">Belongs to the DNA mismatch repair MutS family.</text>
</comment>